<keyword id="KW-0067">ATP-binding</keyword>
<keyword id="KW-0342">GTP-binding</keyword>
<keyword id="KW-0547">Nucleotide-binding</keyword>
<keyword id="KW-0548">Nucleotidyltransferase</keyword>
<keyword id="KW-0808">Transferase</keyword>
<dbReference type="EC" id="2.7.7.4" evidence="2"/>
<dbReference type="EMBL" id="CP001233">
    <property type="protein sequence ID" value="ACP06776.1"/>
    <property type="molecule type" value="Genomic_DNA"/>
</dbReference>
<dbReference type="RefSeq" id="WP_001057929.1">
    <property type="nucleotide sequence ID" value="NC_012578.1"/>
</dbReference>
<dbReference type="SMR" id="C3LRM1"/>
<dbReference type="KEGG" id="vcm:VCM66_2479"/>
<dbReference type="HOGENOM" id="CLU_007265_5_2_6"/>
<dbReference type="UniPathway" id="UPA00140">
    <property type="reaction ID" value="UER00204"/>
</dbReference>
<dbReference type="Proteomes" id="UP000001217">
    <property type="component" value="Chromosome I"/>
</dbReference>
<dbReference type="GO" id="GO:0005524">
    <property type="term" value="F:ATP binding"/>
    <property type="evidence" value="ECO:0007669"/>
    <property type="project" value="UniProtKB-KW"/>
</dbReference>
<dbReference type="GO" id="GO:0005525">
    <property type="term" value="F:GTP binding"/>
    <property type="evidence" value="ECO:0007669"/>
    <property type="project" value="UniProtKB-UniRule"/>
</dbReference>
<dbReference type="GO" id="GO:0003924">
    <property type="term" value="F:GTPase activity"/>
    <property type="evidence" value="ECO:0007669"/>
    <property type="project" value="InterPro"/>
</dbReference>
<dbReference type="GO" id="GO:0097216">
    <property type="term" value="F:guanosine tetraphosphate binding"/>
    <property type="evidence" value="ECO:0007669"/>
    <property type="project" value="UniProtKB-ARBA"/>
</dbReference>
<dbReference type="GO" id="GO:0004781">
    <property type="term" value="F:sulfate adenylyltransferase (ATP) activity"/>
    <property type="evidence" value="ECO:0007669"/>
    <property type="project" value="UniProtKB-UniRule"/>
</dbReference>
<dbReference type="GO" id="GO:0070814">
    <property type="term" value="P:hydrogen sulfide biosynthetic process"/>
    <property type="evidence" value="ECO:0007669"/>
    <property type="project" value="UniProtKB-UniRule"/>
</dbReference>
<dbReference type="GO" id="GO:0000103">
    <property type="term" value="P:sulfate assimilation"/>
    <property type="evidence" value="ECO:0007669"/>
    <property type="project" value="UniProtKB-UniRule"/>
</dbReference>
<dbReference type="CDD" id="cd04166">
    <property type="entry name" value="CysN_ATPS"/>
    <property type="match status" value="1"/>
</dbReference>
<dbReference type="CDD" id="cd03695">
    <property type="entry name" value="CysN_NodQ_II"/>
    <property type="match status" value="1"/>
</dbReference>
<dbReference type="CDD" id="cd04095">
    <property type="entry name" value="CysN_NoDQ_III"/>
    <property type="match status" value="1"/>
</dbReference>
<dbReference type="FunFam" id="2.40.30.10:FF:000027">
    <property type="entry name" value="Sulfate adenylyltransferase subunit 1"/>
    <property type="match status" value="1"/>
</dbReference>
<dbReference type="FunFam" id="2.40.30.10:FF:000031">
    <property type="entry name" value="Sulfate adenylyltransferase subunit 1"/>
    <property type="match status" value="1"/>
</dbReference>
<dbReference type="FunFam" id="3.40.50.300:FF:000119">
    <property type="entry name" value="Sulfate adenylyltransferase subunit 1"/>
    <property type="match status" value="1"/>
</dbReference>
<dbReference type="Gene3D" id="3.40.50.300">
    <property type="entry name" value="P-loop containing nucleotide triphosphate hydrolases"/>
    <property type="match status" value="1"/>
</dbReference>
<dbReference type="Gene3D" id="2.40.30.10">
    <property type="entry name" value="Translation factors"/>
    <property type="match status" value="2"/>
</dbReference>
<dbReference type="HAMAP" id="MF_00062">
    <property type="entry name" value="Sulf_adenylyltr_sub1"/>
    <property type="match status" value="1"/>
</dbReference>
<dbReference type="InterPro" id="IPR041757">
    <property type="entry name" value="CysN_GTP-bd"/>
</dbReference>
<dbReference type="InterPro" id="IPR044138">
    <property type="entry name" value="CysN_II"/>
</dbReference>
<dbReference type="InterPro" id="IPR044139">
    <property type="entry name" value="CysN_NoDQ_III"/>
</dbReference>
<dbReference type="InterPro" id="IPR004161">
    <property type="entry name" value="EFTu-like_2"/>
</dbReference>
<dbReference type="InterPro" id="IPR031157">
    <property type="entry name" value="G_TR_CS"/>
</dbReference>
<dbReference type="InterPro" id="IPR054696">
    <property type="entry name" value="GTP-eEF1A_C"/>
</dbReference>
<dbReference type="InterPro" id="IPR027417">
    <property type="entry name" value="P-loop_NTPase"/>
</dbReference>
<dbReference type="InterPro" id="IPR005225">
    <property type="entry name" value="Small_GTP-bd"/>
</dbReference>
<dbReference type="InterPro" id="IPR011779">
    <property type="entry name" value="SO4_adenylTrfase_lsu"/>
</dbReference>
<dbReference type="InterPro" id="IPR000795">
    <property type="entry name" value="T_Tr_GTP-bd_dom"/>
</dbReference>
<dbReference type="InterPro" id="IPR050100">
    <property type="entry name" value="TRAFAC_GTPase_members"/>
</dbReference>
<dbReference type="InterPro" id="IPR009000">
    <property type="entry name" value="Transl_B-barrel_sf"/>
</dbReference>
<dbReference type="InterPro" id="IPR009001">
    <property type="entry name" value="Transl_elong_EF1A/Init_IF2_C"/>
</dbReference>
<dbReference type="NCBIfam" id="TIGR02034">
    <property type="entry name" value="CysN"/>
    <property type="match status" value="1"/>
</dbReference>
<dbReference type="NCBIfam" id="NF003478">
    <property type="entry name" value="PRK05124.1"/>
    <property type="match status" value="1"/>
</dbReference>
<dbReference type="NCBIfam" id="TIGR00231">
    <property type="entry name" value="small_GTP"/>
    <property type="match status" value="1"/>
</dbReference>
<dbReference type="PANTHER" id="PTHR23115">
    <property type="entry name" value="TRANSLATION FACTOR"/>
    <property type="match status" value="1"/>
</dbReference>
<dbReference type="Pfam" id="PF22594">
    <property type="entry name" value="GTP-eEF1A_C"/>
    <property type="match status" value="1"/>
</dbReference>
<dbReference type="Pfam" id="PF00009">
    <property type="entry name" value="GTP_EFTU"/>
    <property type="match status" value="1"/>
</dbReference>
<dbReference type="Pfam" id="PF03144">
    <property type="entry name" value="GTP_EFTU_D2"/>
    <property type="match status" value="1"/>
</dbReference>
<dbReference type="PRINTS" id="PR00315">
    <property type="entry name" value="ELONGATNFCT"/>
</dbReference>
<dbReference type="SUPFAM" id="SSF50465">
    <property type="entry name" value="EF-Tu/eEF-1alpha/eIF2-gamma C-terminal domain"/>
    <property type="match status" value="1"/>
</dbReference>
<dbReference type="SUPFAM" id="SSF52540">
    <property type="entry name" value="P-loop containing nucleoside triphosphate hydrolases"/>
    <property type="match status" value="1"/>
</dbReference>
<dbReference type="SUPFAM" id="SSF50447">
    <property type="entry name" value="Translation proteins"/>
    <property type="match status" value="1"/>
</dbReference>
<dbReference type="PROSITE" id="PS00301">
    <property type="entry name" value="G_TR_1"/>
    <property type="match status" value="1"/>
</dbReference>
<dbReference type="PROSITE" id="PS51722">
    <property type="entry name" value="G_TR_2"/>
    <property type="match status" value="1"/>
</dbReference>
<feature type="chain" id="PRO_1000117919" description="Sulfate adenylyltransferase subunit 1">
    <location>
        <begin position="1"/>
        <end position="476"/>
    </location>
</feature>
<feature type="domain" description="tr-type G">
    <location>
        <begin position="24"/>
        <end position="238"/>
    </location>
</feature>
<feature type="region of interest" description="G1" evidence="1">
    <location>
        <begin position="33"/>
        <end position="40"/>
    </location>
</feature>
<feature type="region of interest" description="G2" evidence="1">
    <location>
        <begin position="91"/>
        <end position="95"/>
    </location>
</feature>
<feature type="region of interest" description="G3" evidence="1">
    <location>
        <begin position="112"/>
        <end position="115"/>
    </location>
</feature>
<feature type="region of interest" description="G4" evidence="1">
    <location>
        <begin position="167"/>
        <end position="170"/>
    </location>
</feature>
<feature type="region of interest" description="G5" evidence="1">
    <location>
        <begin position="205"/>
        <end position="207"/>
    </location>
</feature>
<feature type="binding site" evidence="2">
    <location>
        <begin position="33"/>
        <end position="40"/>
    </location>
    <ligand>
        <name>GTP</name>
        <dbReference type="ChEBI" id="CHEBI:37565"/>
    </ligand>
</feature>
<feature type="binding site" evidence="2">
    <location>
        <begin position="112"/>
        <end position="116"/>
    </location>
    <ligand>
        <name>GTP</name>
        <dbReference type="ChEBI" id="CHEBI:37565"/>
    </ligand>
</feature>
<feature type="binding site" evidence="2">
    <location>
        <begin position="167"/>
        <end position="170"/>
    </location>
    <ligand>
        <name>GTP</name>
        <dbReference type="ChEBI" id="CHEBI:37565"/>
    </ligand>
</feature>
<comment type="function">
    <text evidence="2">With CysD forms the ATP sulfurylase (ATPS) that catalyzes the adenylation of sulfate producing adenosine 5'-phosphosulfate (APS) and diphosphate, the first enzymatic step in sulfur assimilation pathway. APS synthesis involves the formation of a high-energy phosphoric-sulfuric acid anhydride bond driven by GTP hydrolysis by CysN coupled to ATP hydrolysis by CysD.</text>
</comment>
<comment type="catalytic activity">
    <reaction evidence="2">
        <text>sulfate + ATP + H(+) = adenosine 5'-phosphosulfate + diphosphate</text>
        <dbReference type="Rhea" id="RHEA:18133"/>
        <dbReference type="ChEBI" id="CHEBI:15378"/>
        <dbReference type="ChEBI" id="CHEBI:16189"/>
        <dbReference type="ChEBI" id="CHEBI:30616"/>
        <dbReference type="ChEBI" id="CHEBI:33019"/>
        <dbReference type="ChEBI" id="CHEBI:58243"/>
        <dbReference type="EC" id="2.7.7.4"/>
    </reaction>
</comment>
<comment type="pathway">
    <text evidence="2">Sulfur metabolism; hydrogen sulfide biosynthesis; sulfite from sulfate: step 1/3.</text>
</comment>
<comment type="subunit">
    <text evidence="2">Heterodimer composed of CysD, the smaller subunit, and CysN.</text>
</comment>
<comment type="similarity">
    <text evidence="2">Belongs to the TRAFAC class translation factor GTPase superfamily. Classic translation factor GTPase family. CysN/NodQ subfamily.</text>
</comment>
<name>CYSN_VIBCM</name>
<evidence type="ECO:0000250" key="1"/>
<evidence type="ECO:0000255" key="2">
    <source>
        <dbReference type="HAMAP-Rule" id="MF_00062"/>
    </source>
</evidence>
<sequence>MNNAVKEQLAELGIEGYLNQHQHKSLLRFLTCGSVDDGKSTLIGRLLHDSKQIYEDQLAAVHNDSQRVGTTGSRPDLALLVDGLQAEREQGITIDVAYRYFSTQKRKFIIADTPGHEQYTRNMATGASTCDLAVILIDARKGVLDQTRRHSFISNLLGLKHFIVAVNKMDLVDYSQDRFEQIRAEYLEFSKHLQGETEIQIIPLSALEGDNVVEKSRLMDWYQGPSLLELLEYVDIDRDKSSGAFRFPVQYVNRPNLDFRGFAGTIASGVVKVGDKIKALPSGKTSTVTRIVTFDGDLPQAQAGLAVTLTLADEIDISRGDLIVLESAQVDSTNHLLADVVWMTEQPLQVGRDYDIKIAGKKTVGQVKAVRHQYDINNLSTYHAESLPLNGIGLCEWTFTQTVALDKYLDCADTGGFIIIDRLTNVTVGAGLVRDSLQNITGQTESFSAFELELNALVRKHFPHWQAIDLSRLGKA</sequence>
<reference key="1">
    <citation type="journal article" date="2008" name="PLoS ONE">
        <title>A recalibrated molecular clock and independent origins for the cholera pandemic clones.</title>
        <authorList>
            <person name="Feng L."/>
            <person name="Reeves P.R."/>
            <person name="Lan R."/>
            <person name="Ren Y."/>
            <person name="Gao C."/>
            <person name="Zhou Z."/>
            <person name="Ren Y."/>
            <person name="Cheng J."/>
            <person name="Wang W."/>
            <person name="Wang J."/>
            <person name="Qian W."/>
            <person name="Li D."/>
            <person name="Wang L."/>
        </authorList>
    </citation>
    <scope>NUCLEOTIDE SEQUENCE [LARGE SCALE GENOMIC DNA]</scope>
    <source>
        <strain>M66-2</strain>
    </source>
</reference>
<proteinExistence type="inferred from homology"/>
<protein>
    <recommendedName>
        <fullName evidence="2">Sulfate adenylyltransferase subunit 1</fullName>
        <ecNumber evidence="2">2.7.7.4</ecNumber>
    </recommendedName>
    <alternativeName>
        <fullName evidence="2">ATP-sulfurylase large subunit</fullName>
    </alternativeName>
    <alternativeName>
        <fullName evidence="2">Sulfate adenylate transferase</fullName>
        <shortName evidence="2">SAT</shortName>
    </alternativeName>
</protein>
<gene>
    <name evidence="2" type="primary">cysN</name>
    <name type="ordered locus">VCM66_2479</name>
</gene>
<organism>
    <name type="scientific">Vibrio cholerae serotype O1 (strain M66-2)</name>
    <dbReference type="NCBI Taxonomy" id="579112"/>
    <lineage>
        <taxon>Bacteria</taxon>
        <taxon>Pseudomonadati</taxon>
        <taxon>Pseudomonadota</taxon>
        <taxon>Gammaproteobacteria</taxon>
        <taxon>Vibrionales</taxon>
        <taxon>Vibrionaceae</taxon>
        <taxon>Vibrio</taxon>
    </lineage>
</organism>
<accession>C3LRM1</accession>